<name>SYC_LACLM</name>
<comment type="catalytic activity">
    <reaction evidence="1">
        <text>tRNA(Cys) + L-cysteine + ATP = L-cysteinyl-tRNA(Cys) + AMP + diphosphate</text>
        <dbReference type="Rhea" id="RHEA:17773"/>
        <dbReference type="Rhea" id="RHEA-COMP:9661"/>
        <dbReference type="Rhea" id="RHEA-COMP:9679"/>
        <dbReference type="ChEBI" id="CHEBI:30616"/>
        <dbReference type="ChEBI" id="CHEBI:33019"/>
        <dbReference type="ChEBI" id="CHEBI:35235"/>
        <dbReference type="ChEBI" id="CHEBI:78442"/>
        <dbReference type="ChEBI" id="CHEBI:78517"/>
        <dbReference type="ChEBI" id="CHEBI:456215"/>
        <dbReference type="EC" id="6.1.1.16"/>
    </reaction>
</comment>
<comment type="cofactor">
    <cofactor evidence="1">
        <name>Zn(2+)</name>
        <dbReference type="ChEBI" id="CHEBI:29105"/>
    </cofactor>
    <text evidence="1">Binds 1 zinc ion per subunit.</text>
</comment>
<comment type="subunit">
    <text evidence="1">Monomer.</text>
</comment>
<comment type="subcellular location">
    <subcellularLocation>
        <location evidence="1">Cytoplasm</location>
    </subcellularLocation>
</comment>
<comment type="similarity">
    <text evidence="1">Belongs to the class-I aminoacyl-tRNA synthetase family.</text>
</comment>
<protein>
    <recommendedName>
        <fullName evidence="1">Cysteine--tRNA ligase</fullName>
        <ecNumber evidence="1">6.1.1.16</ecNumber>
    </recommendedName>
    <alternativeName>
        <fullName evidence="1">Cysteinyl-tRNA synthetase</fullName>
        <shortName evidence="1">CysRS</shortName>
    </alternativeName>
</protein>
<evidence type="ECO:0000255" key="1">
    <source>
        <dbReference type="HAMAP-Rule" id="MF_00041"/>
    </source>
</evidence>
<gene>
    <name evidence="1" type="primary">cysS</name>
    <name type="ordered locus">llmg_2040</name>
</gene>
<dbReference type="EC" id="6.1.1.16" evidence="1"/>
<dbReference type="EMBL" id="AM406671">
    <property type="protein sequence ID" value="CAL98607.1"/>
    <property type="molecule type" value="Genomic_DNA"/>
</dbReference>
<dbReference type="RefSeq" id="WP_011835758.1">
    <property type="nucleotide sequence ID" value="NC_009004.1"/>
</dbReference>
<dbReference type="SMR" id="A2RMS1"/>
<dbReference type="STRING" id="416870.llmg_2040"/>
<dbReference type="KEGG" id="llm:llmg_2040"/>
<dbReference type="eggNOG" id="COG0215">
    <property type="taxonomic scope" value="Bacteria"/>
</dbReference>
<dbReference type="HOGENOM" id="CLU_013528_0_1_9"/>
<dbReference type="OrthoDB" id="9815130at2"/>
<dbReference type="PhylomeDB" id="A2RMS1"/>
<dbReference type="Proteomes" id="UP000000364">
    <property type="component" value="Chromosome"/>
</dbReference>
<dbReference type="GO" id="GO:0005829">
    <property type="term" value="C:cytosol"/>
    <property type="evidence" value="ECO:0007669"/>
    <property type="project" value="TreeGrafter"/>
</dbReference>
<dbReference type="GO" id="GO:0005524">
    <property type="term" value="F:ATP binding"/>
    <property type="evidence" value="ECO:0007669"/>
    <property type="project" value="UniProtKB-UniRule"/>
</dbReference>
<dbReference type="GO" id="GO:0004817">
    <property type="term" value="F:cysteine-tRNA ligase activity"/>
    <property type="evidence" value="ECO:0007669"/>
    <property type="project" value="UniProtKB-UniRule"/>
</dbReference>
<dbReference type="GO" id="GO:0008270">
    <property type="term" value="F:zinc ion binding"/>
    <property type="evidence" value="ECO:0007669"/>
    <property type="project" value="UniProtKB-UniRule"/>
</dbReference>
<dbReference type="GO" id="GO:0006423">
    <property type="term" value="P:cysteinyl-tRNA aminoacylation"/>
    <property type="evidence" value="ECO:0007669"/>
    <property type="project" value="UniProtKB-UniRule"/>
</dbReference>
<dbReference type="CDD" id="cd00672">
    <property type="entry name" value="CysRS_core"/>
    <property type="match status" value="1"/>
</dbReference>
<dbReference type="FunFam" id="3.40.50.620:FF:000130">
    <property type="entry name" value="Cysteine--tRNA ligase"/>
    <property type="match status" value="1"/>
</dbReference>
<dbReference type="Gene3D" id="1.20.120.1910">
    <property type="entry name" value="Cysteine-tRNA ligase, C-terminal anti-codon recognition domain"/>
    <property type="match status" value="1"/>
</dbReference>
<dbReference type="Gene3D" id="3.40.50.620">
    <property type="entry name" value="HUPs"/>
    <property type="match status" value="1"/>
</dbReference>
<dbReference type="HAMAP" id="MF_00041">
    <property type="entry name" value="Cys_tRNA_synth"/>
    <property type="match status" value="1"/>
</dbReference>
<dbReference type="InterPro" id="IPR015803">
    <property type="entry name" value="Cys-tRNA-ligase"/>
</dbReference>
<dbReference type="InterPro" id="IPR015273">
    <property type="entry name" value="Cys-tRNA-synt_Ia_DALR"/>
</dbReference>
<dbReference type="InterPro" id="IPR024909">
    <property type="entry name" value="Cys-tRNA/MSH_ligase"/>
</dbReference>
<dbReference type="InterPro" id="IPR056411">
    <property type="entry name" value="CysS_C"/>
</dbReference>
<dbReference type="InterPro" id="IPR014729">
    <property type="entry name" value="Rossmann-like_a/b/a_fold"/>
</dbReference>
<dbReference type="InterPro" id="IPR032678">
    <property type="entry name" value="tRNA-synt_1_cat_dom"/>
</dbReference>
<dbReference type="InterPro" id="IPR009080">
    <property type="entry name" value="tRNAsynth_Ia_anticodon-bd"/>
</dbReference>
<dbReference type="NCBIfam" id="TIGR00435">
    <property type="entry name" value="cysS"/>
    <property type="match status" value="1"/>
</dbReference>
<dbReference type="PANTHER" id="PTHR10890:SF3">
    <property type="entry name" value="CYSTEINE--TRNA LIGASE, CYTOPLASMIC"/>
    <property type="match status" value="1"/>
</dbReference>
<dbReference type="PANTHER" id="PTHR10890">
    <property type="entry name" value="CYSTEINYL-TRNA SYNTHETASE"/>
    <property type="match status" value="1"/>
</dbReference>
<dbReference type="Pfam" id="PF23493">
    <property type="entry name" value="CysS_C"/>
    <property type="match status" value="1"/>
</dbReference>
<dbReference type="Pfam" id="PF09190">
    <property type="entry name" value="DALR_2"/>
    <property type="match status" value="1"/>
</dbReference>
<dbReference type="Pfam" id="PF01406">
    <property type="entry name" value="tRNA-synt_1e"/>
    <property type="match status" value="1"/>
</dbReference>
<dbReference type="PRINTS" id="PR00983">
    <property type="entry name" value="TRNASYNTHCYS"/>
</dbReference>
<dbReference type="SMART" id="SM00840">
    <property type="entry name" value="DALR_2"/>
    <property type="match status" value="1"/>
</dbReference>
<dbReference type="SUPFAM" id="SSF47323">
    <property type="entry name" value="Anticodon-binding domain of a subclass of class I aminoacyl-tRNA synthetases"/>
    <property type="match status" value="1"/>
</dbReference>
<dbReference type="SUPFAM" id="SSF52374">
    <property type="entry name" value="Nucleotidylyl transferase"/>
    <property type="match status" value="1"/>
</dbReference>
<organism>
    <name type="scientific">Lactococcus lactis subsp. cremoris (strain MG1363)</name>
    <dbReference type="NCBI Taxonomy" id="416870"/>
    <lineage>
        <taxon>Bacteria</taxon>
        <taxon>Bacillati</taxon>
        <taxon>Bacillota</taxon>
        <taxon>Bacilli</taxon>
        <taxon>Lactobacillales</taxon>
        <taxon>Streptococcaceae</taxon>
        <taxon>Lactococcus</taxon>
        <taxon>Lactococcus cremoris subsp. cremoris</taxon>
    </lineage>
</organism>
<keyword id="KW-0030">Aminoacyl-tRNA synthetase</keyword>
<keyword id="KW-0067">ATP-binding</keyword>
<keyword id="KW-0963">Cytoplasm</keyword>
<keyword id="KW-0436">Ligase</keyword>
<keyword id="KW-0479">Metal-binding</keyword>
<keyword id="KW-0547">Nucleotide-binding</keyword>
<keyword id="KW-0648">Protein biosynthesis</keyword>
<keyword id="KW-0862">Zinc</keyword>
<feature type="chain" id="PRO_0000332840" description="Cysteine--tRNA ligase">
    <location>
        <begin position="1"/>
        <end position="448"/>
    </location>
</feature>
<feature type="short sequence motif" description="'HIGH' region">
    <location>
        <begin position="29"/>
        <end position="39"/>
    </location>
</feature>
<feature type="short sequence motif" description="'KMSKS' region">
    <location>
        <begin position="267"/>
        <end position="271"/>
    </location>
</feature>
<feature type="binding site" evidence="1">
    <location>
        <position position="27"/>
    </location>
    <ligand>
        <name>Zn(2+)</name>
        <dbReference type="ChEBI" id="CHEBI:29105"/>
    </ligand>
</feature>
<feature type="binding site" evidence="1">
    <location>
        <position position="210"/>
    </location>
    <ligand>
        <name>Zn(2+)</name>
        <dbReference type="ChEBI" id="CHEBI:29105"/>
    </ligand>
</feature>
<feature type="binding site" evidence="1">
    <location>
        <position position="235"/>
    </location>
    <ligand>
        <name>Zn(2+)</name>
        <dbReference type="ChEBI" id="CHEBI:29105"/>
    </ligand>
</feature>
<feature type="binding site" evidence="1">
    <location>
        <position position="239"/>
    </location>
    <ligand>
        <name>Zn(2+)</name>
        <dbReference type="ChEBI" id="CHEBI:29105"/>
    </ligand>
</feature>
<feature type="binding site" evidence="1">
    <location>
        <position position="270"/>
    </location>
    <ligand>
        <name>ATP</name>
        <dbReference type="ChEBI" id="CHEBI:30616"/>
    </ligand>
</feature>
<sequence length="448" mass="50996">MKIYNTYSRQLEDFQPIEPGKVKMYVCGPTVYNYIHVGNARSVVAFDLVRKYLEFRGFEVEYISNFTDVDDKIIKAAASENISTKELSERYIAAFYEDTDLLNVKRASQNPKATEFIEAMIDFIQELLDKDYAYISEGDVYFRVAKSKDYAKLANKNLADLLAGASGRTDEETNLKESPADFALWKSVKADEVSWQAPWGAGRPGWHIECSVMSTSLLGETIDIHGGGADLEFPHHTNEIAQSEAKTGQKFVNYWMHNGFVNVDGEKMSKSLGNFTTVHELLQVVDPQILRFFLTTTHYRRPLNFTDDALTEAENNIKKIENAYRHLDDQAESNLSALTTFRNDFVAAMDEDFNIANGMTVFYDFVSWVNKGNGGAEVKAFFDQVLEILGIKFEIEQSLDSEIEAMIEERQLAREVRDFAKSDEIRDALKAQGIVLEDTKDGVRWHRE</sequence>
<proteinExistence type="inferred from homology"/>
<accession>A2RMS1</accession>
<reference key="1">
    <citation type="journal article" date="2007" name="J. Bacteriol.">
        <title>The complete genome sequence of the lactic acid bacterial paradigm Lactococcus lactis subsp. cremoris MG1363.</title>
        <authorList>
            <person name="Wegmann U."/>
            <person name="O'Connell-Motherway M."/>
            <person name="Zomer A."/>
            <person name="Buist G."/>
            <person name="Shearman C."/>
            <person name="Canchaya C."/>
            <person name="Ventura M."/>
            <person name="Goesmann A."/>
            <person name="Gasson M.J."/>
            <person name="Kuipers O.P."/>
            <person name="van Sinderen D."/>
            <person name="Kok J."/>
        </authorList>
    </citation>
    <scope>NUCLEOTIDE SEQUENCE [LARGE SCALE GENOMIC DNA]</scope>
    <source>
        <strain>MG1363</strain>
    </source>
</reference>